<comment type="cofactor">
    <cofactor evidence="3">
        <name>Zn(2+)</name>
        <dbReference type="ChEBI" id="CHEBI:29105"/>
    </cofactor>
    <text evidence="3">Binds 1 zinc ion per subunit.</text>
</comment>
<comment type="similarity">
    <text evidence="3">Belongs to the universal ribosomal protein uS14 family.</text>
</comment>
<feature type="chain" id="PRO_0000250539" description="Small ribosomal subunit protein uS14z/uS14y/uS14x">
    <location>
        <begin position="1"/>
        <end position="56"/>
    </location>
</feature>
<feature type="binding site" evidence="1">
    <location>
        <position position="21"/>
    </location>
    <ligand>
        <name>Zn(2+)</name>
        <dbReference type="ChEBI" id="CHEBI:29105"/>
    </ligand>
</feature>
<feature type="binding site" evidence="1">
    <location>
        <position position="24"/>
    </location>
    <ligand>
        <name>Zn(2+)</name>
        <dbReference type="ChEBI" id="CHEBI:29105"/>
    </ligand>
</feature>
<feature type="binding site" evidence="1">
    <location>
        <position position="39"/>
    </location>
    <ligand>
        <name>Zn(2+)</name>
        <dbReference type="ChEBI" id="CHEBI:29105"/>
    </ligand>
</feature>
<feature type="binding site" evidence="1">
    <location>
        <position position="42"/>
    </location>
    <ligand>
        <name>Zn(2+)</name>
        <dbReference type="ChEBI" id="CHEBI:29105"/>
    </ligand>
</feature>
<feature type="sequence conflict" description="In Ref. 6; BAD43494/BAD43582/BAD43833." evidence="3" ref="6">
    <original>N</original>
    <variation>K</variation>
    <location>
        <position position="46"/>
    </location>
</feature>
<gene>
    <name type="primary">RPS29A</name>
    <name type="ordered locus">At3g43980</name>
    <name type="ORF">T15B3.120</name>
</gene>
<gene>
    <name type="primary">RPS29B</name>
    <name type="ordered locus">At3g44010</name>
    <name type="ORF">T15B3.150</name>
</gene>
<gene>
    <name type="primary">RPS29C</name>
    <name type="ordered locus">At4g33865</name>
    <name type="ORF">F17I5.3</name>
</gene>
<proteinExistence type="inferred from homology"/>
<organism>
    <name type="scientific">Arabidopsis thaliana</name>
    <name type="common">Mouse-ear cress</name>
    <dbReference type="NCBI Taxonomy" id="3702"/>
    <lineage>
        <taxon>Eukaryota</taxon>
        <taxon>Viridiplantae</taxon>
        <taxon>Streptophyta</taxon>
        <taxon>Embryophyta</taxon>
        <taxon>Tracheophyta</taxon>
        <taxon>Spermatophyta</taxon>
        <taxon>Magnoliopsida</taxon>
        <taxon>eudicotyledons</taxon>
        <taxon>Gunneridae</taxon>
        <taxon>Pentapetalae</taxon>
        <taxon>rosids</taxon>
        <taxon>malvids</taxon>
        <taxon>Brassicales</taxon>
        <taxon>Brassicaceae</taxon>
        <taxon>Camelineae</taxon>
        <taxon>Arabidopsis</taxon>
    </lineage>
</organism>
<keyword id="KW-0479">Metal-binding</keyword>
<keyword id="KW-1185">Reference proteome</keyword>
<keyword id="KW-0687">Ribonucleoprotein</keyword>
<keyword id="KW-0689">Ribosomal protein</keyword>
<keyword id="KW-0862">Zinc</keyword>
<sequence>MGHSNVWNSHPKKYGPGSRLCRVCGNSHGLIRKYGLNCCRQCFRSNAKEIGFIKYR</sequence>
<dbReference type="EMBL" id="AL163975">
    <property type="protein sequence ID" value="CAB88126.1"/>
    <property type="molecule type" value="Genomic_DNA"/>
</dbReference>
<dbReference type="EMBL" id="AL163975">
    <property type="protein sequence ID" value="CAB88129.1"/>
    <property type="molecule type" value="Genomic_DNA"/>
</dbReference>
<dbReference type="EMBL" id="AL031032">
    <property type="status" value="NOT_ANNOTATED_CDS"/>
    <property type="molecule type" value="Genomic_DNA"/>
</dbReference>
<dbReference type="EMBL" id="CP002686">
    <property type="protein sequence ID" value="AEE77851.1"/>
    <property type="molecule type" value="Genomic_DNA"/>
</dbReference>
<dbReference type="EMBL" id="CP002686">
    <property type="protein sequence ID" value="AEE77854.1"/>
    <property type="molecule type" value="Genomic_DNA"/>
</dbReference>
<dbReference type="EMBL" id="CP002686">
    <property type="protein sequence ID" value="ANM65988.1"/>
    <property type="molecule type" value="Genomic_DNA"/>
</dbReference>
<dbReference type="EMBL" id="CP002687">
    <property type="protein sequence ID" value="AEE86285.1"/>
    <property type="molecule type" value="Genomic_DNA"/>
</dbReference>
<dbReference type="EMBL" id="AK118617">
    <property type="protein sequence ID" value="BAC43215.1"/>
    <property type="molecule type" value="mRNA"/>
</dbReference>
<dbReference type="EMBL" id="AF324695">
    <property type="protein sequence ID" value="AAG40046.1"/>
    <property type="molecule type" value="mRNA"/>
</dbReference>
<dbReference type="EMBL" id="AF326888">
    <property type="protein sequence ID" value="AAG41470.1"/>
    <property type="molecule type" value="mRNA"/>
</dbReference>
<dbReference type="EMBL" id="AF349528">
    <property type="protein sequence ID" value="AAK15575.1"/>
    <property type="molecule type" value="mRNA"/>
</dbReference>
<dbReference type="EMBL" id="AF361851">
    <property type="protein sequence ID" value="AAK32863.1"/>
    <property type="molecule type" value="mRNA"/>
</dbReference>
<dbReference type="EMBL" id="AY129480">
    <property type="protein sequence ID" value="AAM91066.1"/>
    <property type="molecule type" value="mRNA"/>
</dbReference>
<dbReference type="EMBL" id="BT002766">
    <property type="protein sequence ID" value="AAO22594.1"/>
    <property type="molecule type" value="mRNA"/>
</dbReference>
<dbReference type="EMBL" id="BT004344">
    <property type="protein sequence ID" value="AAO42338.1"/>
    <property type="molecule type" value="mRNA"/>
</dbReference>
<dbReference type="EMBL" id="AF325031">
    <property type="protein sequence ID" value="AAG40383.1"/>
    <property type="molecule type" value="mRNA"/>
</dbReference>
<dbReference type="EMBL" id="AK175132">
    <property type="protein sequence ID" value="BAD42895.1"/>
    <property type="molecule type" value="mRNA"/>
</dbReference>
<dbReference type="EMBL" id="AK175152">
    <property type="protein sequence ID" value="BAD42915.1"/>
    <property type="molecule type" value="mRNA"/>
</dbReference>
<dbReference type="EMBL" id="AK175172">
    <property type="protein sequence ID" value="BAD42935.1"/>
    <property type="molecule type" value="mRNA"/>
</dbReference>
<dbReference type="EMBL" id="AK175173">
    <property type="protein sequence ID" value="BAD42936.1"/>
    <property type="molecule type" value="mRNA"/>
</dbReference>
<dbReference type="EMBL" id="AK175283">
    <property type="protein sequence ID" value="BAD43046.1"/>
    <property type="molecule type" value="mRNA"/>
</dbReference>
<dbReference type="EMBL" id="AK175731">
    <property type="protein sequence ID" value="BAD43494.1"/>
    <property type="molecule type" value="mRNA"/>
</dbReference>
<dbReference type="EMBL" id="AK175739">
    <property type="protein sequence ID" value="BAD43502.1"/>
    <property type="molecule type" value="mRNA"/>
</dbReference>
<dbReference type="EMBL" id="AK175819">
    <property type="protein sequence ID" value="BAD43582.1"/>
    <property type="molecule type" value="mRNA"/>
</dbReference>
<dbReference type="EMBL" id="AK175918">
    <property type="protein sequence ID" value="BAD43681.1"/>
    <property type="molecule type" value="mRNA"/>
</dbReference>
<dbReference type="EMBL" id="AK176060">
    <property type="protein sequence ID" value="BAD43823.1"/>
    <property type="molecule type" value="mRNA"/>
</dbReference>
<dbReference type="EMBL" id="AK176070">
    <property type="protein sequence ID" value="BAD43833.1"/>
    <property type="molecule type" value="mRNA"/>
</dbReference>
<dbReference type="EMBL" id="AK176294">
    <property type="protein sequence ID" value="BAD44057.1"/>
    <property type="molecule type" value="mRNA"/>
</dbReference>
<dbReference type="EMBL" id="AK176295">
    <property type="protein sequence ID" value="BAD44058.1"/>
    <property type="molecule type" value="mRNA"/>
</dbReference>
<dbReference type="EMBL" id="AK176322">
    <property type="protein sequence ID" value="BAD44085.1"/>
    <property type="molecule type" value="mRNA"/>
</dbReference>
<dbReference type="EMBL" id="AK176332">
    <property type="protein sequence ID" value="BAD44095.1"/>
    <property type="molecule type" value="mRNA"/>
</dbReference>
<dbReference type="EMBL" id="AK176439">
    <property type="protein sequence ID" value="BAD44202.1"/>
    <property type="molecule type" value="mRNA"/>
</dbReference>
<dbReference type="EMBL" id="AK176861">
    <property type="protein sequence ID" value="BAD44624.1"/>
    <property type="molecule type" value="mRNA"/>
</dbReference>
<dbReference type="EMBL" id="AK228020">
    <property type="protein sequence ID" value="BAE99982.1"/>
    <property type="molecule type" value="mRNA"/>
</dbReference>
<dbReference type="EMBL" id="BT028875">
    <property type="protein sequence ID" value="ABI49422.1"/>
    <property type="molecule type" value="mRNA"/>
</dbReference>
<dbReference type="EMBL" id="AY088245">
    <property type="protein sequence ID" value="AAM65785.1"/>
    <property type="molecule type" value="mRNA"/>
</dbReference>
<dbReference type="EMBL" id="AY086767">
    <property type="protein sequence ID" value="AAM63818.1"/>
    <property type="molecule type" value="mRNA"/>
</dbReference>
<dbReference type="EMBL" id="AY086371">
    <property type="protein sequence ID" value="AAM64438.1"/>
    <property type="molecule type" value="mRNA"/>
</dbReference>
<dbReference type="PIR" id="T48952">
    <property type="entry name" value="T48952"/>
</dbReference>
<dbReference type="RefSeq" id="NP_001319679.1">
    <property type="nucleotide sequence ID" value="NM_001339120.1"/>
</dbReference>
<dbReference type="RefSeq" id="NP_189984.1">
    <property type="nucleotide sequence ID" value="NM_114266.2"/>
</dbReference>
<dbReference type="RefSeq" id="NP_189987.1">
    <property type="nucleotide sequence ID" value="NM_114269.3"/>
</dbReference>
<dbReference type="RefSeq" id="NP_567938.1">
    <property type="nucleotide sequence ID" value="NM_119544.4"/>
</dbReference>
<dbReference type="SMR" id="Q680P8"/>
<dbReference type="BioGRID" id="8835">
    <property type="interactions" value="1"/>
</dbReference>
<dbReference type="BioGRID" id="8838">
    <property type="interactions" value="1"/>
</dbReference>
<dbReference type="FunCoup" id="Q680P8">
    <property type="interactions" value="2769"/>
</dbReference>
<dbReference type="IntAct" id="Q680P8">
    <property type="interactions" value="1"/>
</dbReference>
<dbReference type="STRING" id="3702.Q680P8"/>
<dbReference type="iPTMnet" id="Q680P8"/>
<dbReference type="PaxDb" id="3702-AT3G43980.1"/>
<dbReference type="ProteomicsDB" id="237024"/>
<dbReference type="EnsemblPlants" id="AT3G43980.1">
    <property type="protein sequence ID" value="AT3G43980.1"/>
    <property type="gene ID" value="AT3G43980"/>
</dbReference>
<dbReference type="EnsemblPlants" id="AT3G44010.1">
    <property type="protein sequence ID" value="AT3G44010.1"/>
    <property type="gene ID" value="AT3G44010"/>
</dbReference>
<dbReference type="EnsemblPlants" id="AT3G44010.2">
    <property type="protein sequence ID" value="AT3G44010.2"/>
    <property type="gene ID" value="AT3G44010"/>
</dbReference>
<dbReference type="EnsemblPlants" id="AT4G33865.1">
    <property type="protein sequence ID" value="AT4G33865.1"/>
    <property type="gene ID" value="AT4G33865"/>
</dbReference>
<dbReference type="GeneID" id="823515"/>
<dbReference type="GeneID" id="823518"/>
<dbReference type="GeneID" id="829529"/>
<dbReference type="Gramene" id="AT3G43980.1">
    <property type="protein sequence ID" value="AT3G43980.1"/>
    <property type="gene ID" value="AT3G43980"/>
</dbReference>
<dbReference type="Gramene" id="AT3G44010.1">
    <property type="protein sequence ID" value="AT3G44010.1"/>
    <property type="gene ID" value="AT3G44010"/>
</dbReference>
<dbReference type="Gramene" id="AT3G44010.2">
    <property type="protein sequence ID" value="AT3G44010.2"/>
    <property type="gene ID" value="AT3G44010"/>
</dbReference>
<dbReference type="Gramene" id="AT4G33865.1">
    <property type="protein sequence ID" value="AT4G33865.1"/>
    <property type="gene ID" value="AT4G33865"/>
</dbReference>
<dbReference type="KEGG" id="ath:AT3G43980"/>
<dbReference type="KEGG" id="ath:AT3G44010"/>
<dbReference type="KEGG" id="ath:AT4G33865"/>
<dbReference type="Araport" id="AT3G43980"/>
<dbReference type="Araport" id="AT3G44010"/>
<dbReference type="Araport" id="AT4G33865"/>
<dbReference type="TAIR" id="AT3G43980"/>
<dbReference type="TAIR" id="AT3G44010"/>
<dbReference type="TAIR" id="AT4G33865"/>
<dbReference type="eggNOG" id="KOG3506">
    <property type="taxonomic scope" value="Eukaryota"/>
</dbReference>
<dbReference type="HOGENOM" id="CLU_177289_1_1_1"/>
<dbReference type="InParanoid" id="Q680P8"/>
<dbReference type="OMA" id="HCFREIA"/>
<dbReference type="OrthoDB" id="1020558at2759"/>
<dbReference type="PhylomeDB" id="Q680P8"/>
<dbReference type="PRO" id="PR:Q680P8"/>
<dbReference type="Proteomes" id="UP000006548">
    <property type="component" value="Chromosome 3"/>
</dbReference>
<dbReference type="Proteomes" id="UP000006548">
    <property type="component" value="Chromosome 4"/>
</dbReference>
<dbReference type="ExpressionAtlas" id="Q680P8">
    <property type="expression patterns" value="baseline and differential"/>
</dbReference>
<dbReference type="GO" id="GO:0005829">
    <property type="term" value="C:cytosol"/>
    <property type="evidence" value="ECO:0007005"/>
    <property type="project" value="TAIR"/>
</dbReference>
<dbReference type="GO" id="GO:0022627">
    <property type="term" value="C:cytosolic small ribosomal subunit"/>
    <property type="evidence" value="ECO:0007005"/>
    <property type="project" value="TAIR"/>
</dbReference>
<dbReference type="GO" id="GO:0005886">
    <property type="term" value="C:plasma membrane"/>
    <property type="evidence" value="ECO:0007005"/>
    <property type="project" value="TAIR"/>
</dbReference>
<dbReference type="GO" id="GO:0003735">
    <property type="term" value="F:structural constituent of ribosome"/>
    <property type="evidence" value="ECO:0000314"/>
    <property type="project" value="CAFA"/>
</dbReference>
<dbReference type="GO" id="GO:0008270">
    <property type="term" value="F:zinc ion binding"/>
    <property type="evidence" value="ECO:0007669"/>
    <property type="project" value="InterPro"/>
</dbReference>
<dbReference type="GO" id="GO:0006412">
    <property type="term" value="P:translation"/>
    <property type="evidence" value="ECO:0007669"/>
    <property type="project" value="InterPro"/>
</dbReference>
<dbReference type="FunFam" id="4.10.830.10:FF:000002">
    <property type="entry name" value="40S ribosomal protein S29"/>
    <property type="match status" value="1"/>
</dbReference>
<dbReference type="Gene3D" id="4.10.830.10">
    <property type="entry name" value="30s Ribosomal Protein S14, Chain N"/>
    <property type="match status" value="1"/>
</dbReference>
<dbReference type="InterPro" id="IPR001209">
    <property type="entry name" value="Ribosomal_uS14"/>
</dbReference>
<dbReference type="InterPro" id="IPR039744">
    <property type="entry name" value="RIbosomal_uS14_euk_arc"/>
</dbReference>
<dbReference type="InterPro" id="IPR043140">
    <property type="entry name" value="Ribosomal_uS14_sf"/>
</dbReference>
<dbReference type="NCBIfam" id="NF004424">
    <property type="entry name" value="PRK05766.1"/>
    <property type="match status" value="1"/>
</dbReference>
<dbReference type="PANTHER" id="PTHR12010">
    <property type="entry name" value="40S RIBOSOMAL PROTEIN S29"/>
    <property type="match status" value="1"/>
</dbReference>
<dbReference type="PANTHER" id="PTHR12010:SF22">
    <property type="entry name" value="SMALL RIBOSOMAL SUBUNIT PROTEIN US14Z_US14Y_US14X"/>
    <property type="match status" value="1"/>
</dbReference>
<dbReference type="Pfam" id="PF00253">
    <property type="entry name" value="Ribosomal_S14"/>
    <property type="match status" value="1"/>
</dbReference>
<protein>
    <recommendedName>
        <fullName evidence="2">Small ribosomal subunit protein uS14z/uS14y/uS14x</fullName>
    </recommendedName>
    <alternativeName>
        <fullName>40S ribosomal protein S29</fullName>
    </alternativeName>
</protein>
<reference key="1">
    <citation type="journal article" date="2000" name="Nature">
        <title>Sequence and analysis of chromosome 3 of the plant Arabidopsis thaliana.</title>
        <authorList>
            <person name="Salanoubat M."/>
            <person name="Lemcke K."/>
            <person name="Rieger M."/>
            <person name="Ansorge W."/>
            <person name="Unseld M."/>
            <person name="Fartmann B."/>
            <person name="Valle G."/>
            <person name="Bloecker H."/>
            <person name="Perez-Alonso M."/>
            <person name="Obermaier B."/>
            <person name="Delseny M."/>
            <person name="Boutry M."/>
            <person name="Grivell L.A."/>
            <person name="Mache R."/>
            <person name="Puigdomenech P."/>
            <person name="De Simone V."/>
            <person name="Choisne N."/>
            <person name="Artiguenave F."/>
            <person name="Robert C."/>
            <person name="Brottier P."/>
            <person name="Wincker P."/>
            <person name="Cattolico L."/>
            <person name="Weissenbach J."/>
            <person name="Saurin W."/>
            <person name="Quetier F."/>
            <person name="Schaefer M."/>
            <person name="Mueller-Auer S."/>
            <person name="Gabel C."/>
            <person name="Fuchs M."/>
            <person name="Benes V."/>
            <person name="Wurmbach E."/>
            <person name="Drzonek H."/>
            <person name="Erfle H."/>
            <person name="Jordan N."/>
            <person name="Bangert S."/>
            <person name="Wiedelmann R."/>
            <person name="Kranz H."/>
            <person name="Voss H."/>
            <person name="Holland R."/>
            <person name="Brandt P."/>
            <person name="Nyakatura G."/>
            <person name="Vezzi A."/>
            <person name="D'Angelo M."/>
            <person name="Pallavicini A."/>
            <person name="Toppo S."/>
            <person name="Simionati B."/>
            <person name="Conrad A."/>
            <person name="Hornischer K."/>
            <person name="Kauer G."/>
            <person name="Loehnert T.-H."/>
            <person name="Nordsiek G."/>
            <person name="Reichelt J."/>
            <person name="Scharfe M."/>
            <person name="Schoen O."/>
            <person name="Bargues M."/>
            <person name="Terol J."/>
            <person name="Climent J."/>
            <person name="Navarro P."/>
            <person name="Collado C."/>
            <person name="Perez-Perez A."/>
            <person name="Ottenwaelder B."/>
            <person name="Duchemin D."/>
            <person name="Cooke R."/>
            <person name="Laudie M."/>
            <person name="Berger-Llauro C."/>
            <person name="Purnelle B."/>
            <person name="Masuy D."/>
            <person name="de Haan M."/>
            <person name="Maarse A.C."/>
            <person name="Alcaraz J.-P."/>
            <person name="Cottet A."/>
            <person name="Casacuberta E."/>
            <person name="Monfort A."/>
            <person name="Argiriou A."/>
            <person name="Flores M."/>
            <person name="Liguori R."/>
            <person name="Vitale D."/>
            <person name="Mannhaupt G."/>
            <person name="Haase D."/>
            <person name="Schoof H."/>
            <person name="Rudd S."/>
            <person name="Zaccaria P."/>
            <person name="Mewes H.-W."/>
            <person name="Mayer K.F.X."/>
            <person name="Kaul S."/>
            <person name="Town C.D."/>
            <person name="Koo H.L."/>
            <person name="Tallon L.J."/>
            <person name="Jenkins J."/>
            <person name="Rooney T."/>
            <person name="Rizzo M."/>
            <person name="Walts A."/>
            <person name="Utterback T."/>
            <person name="Fujii C.Y."/>
            <person name="Shea T.P."/>
            <person name="Creasy T.H."/>
            <person name="Haas B."/>
            <person name="Maiti R."/>
            <person name="Wu D."/>
            <person name="Peterson J."/>
            <person name="Van Aken S."/>
            <person name="Pai G."/>
            <person name="Militscher J."/>
            <person name="Sellers P."/>
            <person name="Gill J.E."/>
            <person name="Feldblyum T.V."/>
            <person name="Preuss D."/>
            <person name="Lin X."/>
            <person name="Nierman W.C."/>
            <person name="Salzberg S.L."/>
            <person name="White O."/>
            <person name="Venter J.C."/>
            <person name="Fraser C.M."/>
            <person name="Kaneko T."/>
            <person name="Nakamura Y."/>
            <person name="Sato S."/>
            <person name="Kato T."/>
            <person name="Asamizu E."/>
            <person name="Sasamoto S."/>
            <person name="Kimura T."/>
            <person name="Idesawa K."/>
            <person name="Kawashima K."/>
            <person name="Kishida Y."/>
            <person name="Kiyokawa C."/>
            <person name="Kohara M."/>
            <person name="Matsumoto M."/>
            <person name="Matsuno A."/>
            <person name="Muraki A."/>
            <person name="Nakayama S."/>
            <person name="Nakazaki N."/>
            <person name="Shinpo S."/>
            <person name="Takeuchi C."/>
            <person name="Wada T."/>
            <person name="Watanabe A."/>
            <person name="Yamada M."/>
            <person name="Yasuda M."/>
            <person name="Tabata S."/>
        </authorList>
    </citation>
    <scope>NUCLEOTIDE SEQUENCE [LARGE SCALE GENOMIC DNA] (RPS29A AND RPS29B)</scope>
    <source>
        <strain>cv. Columbia</strain>
    </source>
</reference>
<reference key="2">
    <citation type="journal article" date="1999" name="Nature">
        <title>Sequence and analysis of chromosome 4 of the plant Arabidopsis thaliana.</title>
        <authorList>
            <person name="Mayer K.F.X."/>
            <person name="Schueller C."/>
            <person name="Wambutt R."/>
            <person name="Murphy G."/>
            <person name="Volckaert G."/>
            <person name="Pohl T."/>
            <person name="Duesterhoeft A."/>
            <person name="Stiekema W."/>
            <person name="Entian K.-D."/>
            <person name="Terryn N."/>
            <person name="Harris B."/>
            <person name="Ansorge W."/>
            <person name="Brandt P."/>
            <person name="Grivell L.A."/>
            <person name="Rieger M."/>
            <person name="Weichselgartner M."/>
            <person name="de Simone V."/>
            <person name="Obermaier B."/>
            <person name="Mache R."/>
            <person name="Mueller M."/>
            <person name="Kreis M."/>
            <person name="Delseny M."/>
            <person name="Puigdomenech P."/>
            <person name="Watson M."/>
            <person name="Schmidtheini T."/>
            <person name="Reichert B."/>
            <person name="Portetelle D."/>
            <person name="Perez-Alonso M."/>
            <person name="Boutry M."/>
            <person name="Bancroft I."/>
            <person name="Vos P."/>
            <person name="Hoheisel J."/>
            <person name="Zimmermann W."/>
            <person name="Wedler H."/>
            <person name="Ridley P."/>
            <person name="Langham S.-A."/>
            <person name="McCullagh B."/>
            <person name="Bilham L."/>
            <person name="Robben J."/>
            <person name="van der Schueren J."/>
            <person name="Grymonprez B."/>
            <person name="Chuang Y.-J."/>
            <person name="Vandenbussche F."/>
            <person name="Braeken M."/>
            <person name="Weltjens I."/>
            <person name="Voet M."/>
            <person name="Bastiaens I."/>
            <person name="Aert R."/>
            <person name="Defoor E."/>
            <person name="Weitzenegger T."/>
            <person name="Bothe G."/>
            <person name="Ramsperger U."/>
            <person name="Hilbert H."/>
            <person name="Braun M."/>
            <person name="Holzer E."/>
            <person name="Brandt A."/>
            <person name="Peters S."/>
            <person name="van Staveren M."/>
            <person name="Dirkse W."/>
            <person name="Mooijman P."/>
            <person name="Klein Lankhorst R."/>
            <person name="Rose M."/>
            <person name="Hauf J."/>
            <person name="Koetter P."/>
            <person name="Berneiser S."/>
            <person name="Hempel S."/>
            <person name="Feldpausch M."/>
            <person name="Lamberth S."/>
            <person name="Van den Daele H."/>
            <person name="De Keyser A."/>
            <person name="Buysshaert C."/>
            <person name="Gielen J."/>
            <person name="Villarroel R."/>
            <person name="De Clercq R."/>
            <person name="van Montagu M."/>
            <person name="Rogers J."/>
            <person name="Cronin A."/>
            <person name="Quail M.A."/>
            <person name="Bray-Allen S."/>
            <person name="Clark L."/>
            <person name="Doggett J."/>
            <person name="Hall S."/>
            <person name="Kay M."/>
            <person name="Lennard N."/>
            <person name="McLay K."/>
            <person name="Mayes R."/>
            <person name="Pettett A."/>
            <person name="Rajandream M.A."/>
            <person name="Lyne M."/>
            <person name="Benes V."/>
            <person name="Rechmann S."/>
            <person name="Borkova D."/>
            <person name="Bloecker H."/>
            <person name="Scharfe M."/>
            <person name="Grimm M."/>
            <person name="Loehnert T.-H."/>
            <person name="Dose S."/>
            <person name="de Haan M."/>
            <person name="Maarse A.C."/>
            <person name="Schaefer M."/>
            <person name="Mueller-Auer S."/>
            <person name="Gabel C."/>
            <person name="Fuchs M."/>
            <person name="Fartmann B."/>
            <person name="Granderath K."/>
            <person name="Dauner D."/>
            <person name="Herzl A."/>
            <person name="Neumann S."/>
            <person name="Argiriou A."/>
            <person name="Vitale D."/>
            <person name="Liguori R."/>
            <person name="Piravandi E."/>
            <person name="Massenet O."/>
            <person name="Quigley F."/>
            <person name="Clabauld G."/>
            <person name="Muendlein A."/>
            <person name="Felber R."/>
            <person name="Schnabl S."/>
            <person name="Hiller R."/>
            <person name="Schmidt W."/>
            <person name="Lecharny A."/>
            <person name="Aubourg S."/>
            <person name="Chefdor F."/>
            <person name="Cooke R."/>
            <person name="Berger C."/>
            <person name="Monfort A."/>
            <person name="Casacuberta E."/>
            <person name="Gibbons T."/>
            <person name="Weber N."/>
            <person name="Vandenbol M."/>
            <person name="Bargues M."/>
            <person name="Terol J."/>
            <person name="Torres A."/>
            <person name="Perez-Perez A."/>
            <person name="Purnelle B."/>
            <person name="Bent E."/>
            <person name="Johnson S."/>
            <person name="Tacon D."/>
            <person name="Jesse T."/>
            <person name="Heijnen L."/>
            <person name="Schwarz S."/>
            <person name="Scholler P."/>
            <person name="Heber S."/>
            <person name="Francs P."/>
            <person name="Bielke C."/>
            <person name="Frishman D."/>
            <person name="Haase D."/>
            <person name="Lemcke K."/>
            <person name="Mewes H.-W."/>
            <person name="Stocker S."/>
            <person name="Zaccaria P."/>
            <person name="Bevan M."/>
            <person name="Wilson R.K."/>
            <person name="de la Bastide M."/>
            <person name="Habermann K."/>
            <person name="Parnell L."/>
            <person name="Dedhia N."/>
            <person name="Gnoj L."/>
            <person name="Schutz K."/>
            <person name="Huang E."/>
            <person name="Spiegel L."/>
            <person name="Sekhon M."/>
            <person name="Murray J."/>
            <person name="Sheet P."/>
            <person name="Cordes M."/>
            <person name="Abu-Threideh J."/>
            <person name="Stoneking T."/>
            <person name="Kalicki J."/>
            <person name="Graves T."/>
            <person name="Harmon G."/>
            <person name="Edwards J."/>
            <person name="Latreille P."/>
            <person name="Courtney L."/>
            <person name="Cloud J."/>
            <person name="Abbott A."/>
            <person name="Scott K."/>
            <person name="Johnson D."/>
            <person name="Minx P."/>
            <person name="Bentley D."/>
            <person name="Fulton B."/>
            <person name="Miller N."/>
            <person name="Greco T."/>
            <person name="Kemp K."/>
            <person name="Kramer J."/>
            <person name="Fulton L."/>
            <person name="Mardis E."/>
            <person name="Dante M."/>
            <person name="Pepin K."/>
            <person name="Hillier L.W."/>
            <person name="Nelson J."/>
            <person name="Spieth J."/>
            <person name="Ryan E."/>
            <person name="Andrews S."/>
            <person name="Geisel C."/>
            <person name="Layman D."/>
            <person name="Du H."/>
            <person name="Ali J."/>
            <person name="Berghoff A."/>
            <person name="Jones K."/>
            <person name="Drone K."/>
            <person name="Cotton M."/>
            <person name="Joshu C."/>
            <person name="Antonoiu B."/>
            <person name="Zidanic M."/>
            <person name="Strong C."/>
            <person name="Sun H."/>
            <person name="Lamar B."/>
            <person name="Yordan C."/>
            <person name="Ma P."/>
            <person name="Zhong J."/>
            <person name="Preston R."/>
            <person name="Vil D."/>
            <person name="Shekher M."/>
            <person name="Matero A."/>
            <person name="Shah R."/>
            <person name="Swaby I.K."/>
            <person name="O'Shaughnessy A."/>
            <person name="Rodriguez M."/>
            <person name="Hoffman J."/>
            <person name="Till S."/>
            <person name="Granat S."/>
            <person name="Shohdy N."/>
            <person name="Hasegawa A."/>
            <person name="Hameed A."/>
            <person name="Lodhi M."/>
            <person name="Johnson A."/>
            <person name="Chen E."/>
            <person name="Marra M.A."/>
            <person name="Martienssen R."/>
            <person name="McCombie W.R."/>
        </authorList>
    </citation>
    <scope>NUCLEOTIDE SEQUENCE [LARGE SCALE GENOMIC DNA] (RPS29C)</scope>
    <source>
        <strain>cv. Columbia</strain>
    </source>
</reference>
<reference key="3">
    <citation type="journal article" date="2017" name="Plant J.">
        <title>Araport11: a complete reannotation of the Arabidopsis thaliana reference genome.</title>
        <authorList>
            <person name="Cheng C.Y."/>
            <person name="Krishnakumar V."/>
            <person name="Chan A.P."/>
            <person name="Thibaud-Nissen F."/>
            <person name="Schobel S."/>
            <person name="Town C.D."/>
        </authorList>
    </citation>
    <scope>GENOME REANNOTATION</scope>
    <source>
        <strain>cv. Columbia</strain>
    </source>
</reference>
<reference key="4">
    <citation type="journal article" date="2002" name="Science">
        <title>Functional annotation of a full-length Arabidopsis cDNA collection.</title>
        <authorList>
            <person name="Seki M."/>
            <person name="Narusaka M."/>
            <person name="Kamiya A."/>
            <person name="Ishida J."/>
            <person name="Satou M."/>
            <person name="Sakurai T."/>
            <person name="Nakajima M."/>
            <person name="Enju A."/>
            <person name="Akiyama K."/>
            <person name="Oono Y."/>
            <person name="Muramatsu M."/>
            <person name="Hayashizaki Y."/>
            <person name="Kawai J."/>
            <person name="Carninci P."/>
            <person name="Itoh M."/>
            <person name="Ishii Y."/>
            <person name="Arakawa T."/>
            <person name="Shibata K."/>
            <person name="Shinagawa A."/>
            <person name="Shinozaki K."/>
        </authorList>
    </citation>
    <scope>NUCLEOTIDE SEQUENCE [LARGE SCALE MRNA] (RPS29C)</scope>
    <source>
        <strain>cv. Columbia</strain>
    </source>
</reference>
<reference key="5">
    <citation type="journal article" date="2003" name="Science">
        <title>Empirical analysis of transcriptional activity in the Arabidopsis genome.</title>
        <authorList>
            <person name="Yamada K."/>
            <person name="Lim J."/>
            <person name="Dale J.M."/>
            <person name="Chen H."/>
            <person name="Shinn P."/>
            <person name="Palm C.J."/>
            <person name="Southwick A.M."/>
            <person name="Wu H.C."/>
            <person name="Kim C.J."/>
            <person name="Nguyen M."/>
            <person name="Pham P.K."/>
            <person name="Cheuk R.F."/>
            <person name="Karlin-Newmann G."/>
            <person name="Liu S.X."/>
            <person name="Lam B."/>
            <person name="Sakano H."/>
            <person name="Wu T."/>
            <person name="Yu G."/>
            <person name="Miranda M."/>
            <person name="Quach H.L."/>
            <person name="Tripp M."/>
            <person name="Chang C.H."/>
            <person name="Lee J.M."/>
            <person name="Toriumi M.J."/>
            <person name="Chan M.M."/>
            <person name="Tang C.C."/>
            <person name="Onodera C.S."/>
            <person name="Deng J.M."/>
            <person name="Akiyama K."/>
            <person name="Ansari Y."/>
            <person name="Arakawa T."/>
            <person name="Banh J."/>
            <person name="Banno F."/>
            <person name="Bowser L."/>
            <person name="Brooks S.Y."/>
            <person name="Carninci P."/>
            <person name="Chao Q."/>
            <person name="Choy N."/>
            <person name="Enju A."/>
            <person name="Goldsmith A.D."/>
            <person name="Gurjal M."/>
            <person name="Hansen N.F."/>
            <person name="Hayashizaki Y."/>
            <person name="Johnson-Hopson C."/>
            <person name="Hsuan V.W."/>
            <person name="Iida K."/>
            <person name="Karnes M."/>
            <person name="Khan S."/>
            <person name="Koesema E."/>
            <person name="Ishida J."/>
            <person name="Jiang P.X."/>
            <person name="Jones T."/>
            <person name="Kawai J."/>
            <person name="Kamiya A."/>
            <person name="Meyers C."/>
            <person name="Nakajima M."/>
            <person name="Narusaka M."/>
            <person name="Seki M."/>
            <person name="Sakurai T."/>
            <person name="Satou M."/>
            <person name="Tamse R."/>
            <person name="Vaysberg M."/>
            <person name="Wallender E.K."/>
            <person name="Wong C."/>
            <person name="Yamamura Y."/>
            <person name="Yuan S."/>
            <person name="Shinozaki K."/>
            <person name="Davis R.W."/>
            <person name="Theologis A."/>
            <person name="Ecker J.R."/>
        </authorList>
    </citation>
    <scope>NUCLEOTIDE SEQUENCE [LARGE SCALE MRNA] (RPS29A; RPS29B AND RPS29C)</scope>
    <source>
        <strain>cv. Columbia</strain>
    </source>
</reference>
<reference key="6">
    <citation type="submission" date="2006-07" db="EMBL/GenBank/DDBJ databases">
        <title>Large-scale analysis of RIKEN Arabidopsis full-length (RAFL) cDNAs.</title>
        <authorList>
            <person name="Totoki Y."/>
            <person name="Seki M."/>
            <person name="Ishida J."/>
            <person name="Nakajima M."/>
            <person name="Enju A."/>
            <person name="Kamiya A."/>
            <person name="Narusaka M."/>
            <person name="Shin-i T."/>
            <person name="Nakagawa M."/>
            <person name="Sakamoto N."/>
            <person name="Oishi K."/>
            <person name="Kohara Y."/>
            <person name="Kobayashi M."/>
            <person name="Toyoda A."/>
            <person name="Sakaki Y."/>
            <person name="Sakurai T."/>
            <person name="Iida K."/>
            <person name="Akiyama K."/>
            <person name="Satou M."/>
            <person name="Toyoda T."/>
            <person name="Konagaya A."/>
            <person name="Carninci P."/>
            <person name="Kawai J."/>
            <person name="Hayashizaki Y."/>
            <person name="Shinozaki K."/>
        </authorList>
    </citation>
    <scope>NUCLEOTIDE SEQUENCE [LARGE SCALE MRNA] (RPS29C)</scope>
    <source>
        <strain>cv. Columbia</strain>
    </source>
</reference>
<reference key="7">
    <citation type="submission" date="2006-09" db="EMBL/GenBank/DDBJ databases">
        <title>Arabidopsis ORF clones.</title>
        <authorList>
            <person name="Bautista V.R."/>
            <person name="Kim C.J."/>
            <person name="Chen H."/>
            <person name="Quinitio C."/>
            <person name="Ecker J.R."/>
        </authorList>
    </citation>
    <scope>NUCLEOTIDE SEQUENCE [LARGE SCALE MRNA] (RPS29C)</scope>
    <source>
        <strain>cv. Columbia</strain>
    </source>
</reference>
<reference key="8">
    <citation type="submission" date="2002-03" db="EMBL/GenBank/DDBJ databases">
        <title>Full-length cDNA from Arabidopsis thaliana.</title>
        <authorList>
            <person name="Brover V.V."/>
            <person name="Troukhan M.E."/>
            <person name="Alexandrov N.A."/>
            <person name="Lu Y.-P."/>
            <person name="Flavell R.B."/>
            <person name="Feldmann K.A."/>
        </authorList>
    </citation>
    <scope>NUCLEOTIDE SEQUENCE [LARGE SCALE MRNA] (RPS29A; RPS29B AND RPS29C)</scope>
</reference>
<reference key="9">
    <citation type="journal article" date="2001" name="Plant Physiol.">
        <title>The organization of cytoplasmic ribosomal protein genes in the Arabidopsis genome.</title>
        <authorList>
            <person name="Barakat A."/>
            <person name="Szick-Miranda K."/>
            <person name="Chang I.-F."/>
            <person name="Guyot R."/>
            <person name="Blanc G."/>
            <person name="Cooke R."/>
            <person name="Delseny M."/>
            <person name="Bailey-Serres J."/>
        </authorList>
    </citation>
    <scope>GENE FAMILY ORGANIZATION</scope>
    <scope>NOMENCLATURE</scope>
</reference>
<reference key="10">
    <citation type="journal article" date="2023" name="Plant Cell">
        <title>An updated nomenclature for plant ribosomal protein genes.</title>
        <authorList>
            <person name="Scarpin M.R."/>
            <person name="Busche M."/>
            <person name="Martinez R.E."/>
            <person name="Harper L.C."/>
            <person name="Reiser L."/>
            <person name="Szakonyi D."/>
            <person name="Merchante C."/>
            <person name="Lan T."/>
            <person name="Xiong W."/>
            <person name="Mo B."/>
            <person name="Tang G."/>
            <person name="Chen X."/>
            <person name="Bailey-Serres J."/>
            <person name="Browning K.S."/>
            <person name="Brunkard J.O."/>
        </authorList>
    </citation>
    <scope>NOMENCLATURE</scope>
</reference>
<accession>Q680P8</accession>
<accession>Q9LDT9</accession>
<evidence type="ECO:0000255" key="1"/>
<evidence type="ECO:0000303" key="2">
    <source>
    </source>
</evidence>
<evidence type="ECO:0000305" key="3"/>
<name>RS29_ARATH</name>